<protein>
    <recommendedName>
        <fullName evidence="1">2-aminoethylphosphonate--pyruvate transaminase</fullName>
        <ecNumber evidence="1">2.6.1.37</ecNumber>
    </recommendedName>
    <alternativeName>
        <fullName evidence="1">2-aminoethylphosphonate aminotransferase</fullName>
    </alternativeName>
    <alternativeName>
        <fullName evidence="1">AEP transaminase</fullName>
        <shortName evidence="1">AEPT</shortName>
    </alternativeName>
</protein>
<keyword id="KW-0032">Aminotransferase</keyword>
<keyword id="KW-0663">Pyridoxal phosphate</keyword>
<keyword id="KW-0670">Pyruvate</keyword>
<keyword id="KW-0808">Transferase</keyword>
<proteinExistence type="inferred from homology"/>
<accession>B5FKT6</accession>
<reference key="1">
    <citation type="journal article" date="2011" name="J. Bacteriol.">
        <title>Comparative genomics of 28 Salmonella enterica isolates: evidence for CRISPR-mediated adaptive sublineage evolution.</title>
        <authorList>
            <person name="Fricke W.F."/>
            <person name="Mammel M.K."/>
            <person name="McDermott P.F."/>
            <person name="Tartera C."/>
            <person name="White D.G."/>
            <person name="Leclerc J.E."/>
            <person name="Ravel J."/>
            <person name="Cebula T.A."/>
        </authorList>
    </citation>
    <scope>NUCLEOTIDE SEQUENCE [LARGE SCALE GENOMIC DNA]</scope>
    <source>
        <strain>CT_02021853</strain>
    </source>
</reference>
<evidence type="ECO:0000255" key="1">
    <source>
        <dbReference type="HAMAP-Rule" id="MF_01376"/>
    </source>
</evidence>
<organism>
    <name type="scientific">Salmonella dublin (strain CT_02021853)</name>
    <dbReference type="NCBI Taxonomy" id="439851"/>
    <lineage>
        <taxon>Bacteria</taxon>
        <taxon>Pseudomonadati</taxon>
        <taxon>Pseudomonadota</taxon>
        <taxon>Gammaproteobacteria</taxon>
        <taxon>Enterobacterales</taxon>
        <taxon>Enterobacteriaceae</taxon>
        <taxon>Salmonella</taxon>
    </lineage>
</organism>
<gene>
    <name evidence="1" type="primary">phnW</name>
    <name type="ordered locus">SeD_A0472</name>
</gene>
<sequence length="367" mass="40356">MTSRNYLLLTPGPLTTSRTVKEAMLFDSCTWDDDYNIGVVEQIRQQLTELATASEGYTSVLLQGSGSYAVEAVLGSALGPQDKVLIVSNGAYGARMVEMAGLMGIAHHAYDCGEVARPDVQAIDAILNADPTISHIAMVHSETTTGMLNPIDEVGTLAHRYGKTYIVDAMSSFGGIPMDIAALHIDYLISSANKCIQGVPGFAFVIAREQKLAACKGRSRSLSLDLYAQWRCMEDNHGKWRFTSPTHTVLAFAQALKELAKEGGVAARHQRYQQNQRSLVAGMRALGFNTLLDDELHSPIITAFYSPEDPQYRFSEFYRRLKEQGFVIYPGKVSQSDCFRIGNIGEVYAADITALLTAIRTAMYWTK</sequence>
<dbReference type="EC" id="2.6.1.37" evidence="1"/>
<dbReference type="EMBL" id="CP001144">
    <property type="protein sequence ID" value="ACH77516.1"/>
    <property type="molecule type" value="Genomic_DNA"/>
</dbReference>
<dbReference type="RefSeq" id="WP_000203973.1">
    <property type="nucleotide sequence ID" value="NC_011205.1"/>
</dbReference>
<dbReference type="SMR" id="B5FKT6"/>
<dbReference type="KEGG" id="sed:SeD_A0472"/>
<dbReference type="HOGENOM" id="CLU_027686_3_1_6"/>
<dbReference type="Proteomes" id="UP000008322">
    <property type="component" value="Chromosome"/>
</dbReference>
<dbReference type="GO" id="GO:0047304">
    <property type="term" value="F:2-aminoethylphosphonate-pyruvate transaminase activity"/>
    <property type="evidence" value="ECO:0007669"/>
    <property type="project" value="UniProtKB-UniRule"/>
</dbReference>
<dbReference type="GO" id="GO:0019700">
    <property type="term" value="P:organic phosphonate catabolic process"/>
    <property type="evidence" value="ECO:0007669"/>
    <property type="project" value="InterPro"/>
</dbReference>
<dbReference type="Gene3D" id="3.90.1150.10">
    <property type="entry name" value="Aspartate Aminotransferase, domain 1"/>
    <property type="match status" value="1"/>
</dbReference>
<dbReference type="Gene3D" id="3.40.640.10">
    <property type="entry name" value="Type I PLP-dependent aspartate aminotransferase-like (Major domain)"/>
    <property type="match status" value="1"/>
</dbReference>
<dbReference type="HAMAP" id="MF_01376">
    <property type="entry name" value="PhnW_aminotrans_5"/>
    <property type="match status" value="1"/>
</dbReference>
<dbReference type="InterPro" id="IPR000192">
    <property type="entry name" value="Aminotrans_V_dom"/>
</dbReference>
<dbReference type="InterPro" id="IPR012703">
    <property type="entry name" value="NH2EtPonate_pyrv_transaminase"/>
</dbReference>
<dbReference type="InterPro" id="IPR015424">
    <property type="entry name" value="PyrdxlP-dep_Trfase"/>
</dbReference>
<dbReference type="InterPro" id="IPR015421">
    <property type="entry name" value="PyrdxlP-dep_Trfase_major"/>
</dbReference>
<dbReference type="InterPro" id="IPR015422">
    <property type="entry name" value="PyrdxlP-dep_Trfase_small"/>
</dbReference>
<dbReference type="InterPro" id="IPR024169">
    <property type="entry name" value="SP_NH2Trfase/AEP_transaminase"/>
</dbReference>
<dbReference type="NCBIfam" id="TIGR03301">
    <property type="entry name" value="PhnW-AepZ"/>
    <property type="match status" value="1"/>
</dbReference>
<dbReference type="NCBIfam" id="NF010006">
    <property type="entry name" value="PRK13479.1"/>
    <property type="match status" value="1"/>
</dbReference>
<dbReference type="NCBIfam" id="TIGR02326">
    <property type="entry name" value="transamin_PhnW"/>
    <property type="match status" value="1"/>
</dbReference>
<dbReference type="PANTHER" id="PTHR42778">
    <property type="entry name" value="2-AMINOETHYLPHOSPHONATE--PYRUVATE TRANSAMINASE"/>
    <property type="match status" value="1"/>
</dbReference>
<dbReference type="PANTHER" id="PTHR42778:SF1">
    <property type="entry name" value="2-AMINOETHYLPHOSPHONATE--PYRUVATE TRANSAMINASE"/>
    <property type="match status" value="1"/>
</dbReference>
<dbReference type="Pfam" id="PF00266">
    <property type="entry name" value="Aminotran_5"/>
    <property type="match status" value="1"/>
</dbReference>
<dbReference type="PIRSF" id="PIRSF000524">
    <property type="entry name" value="SPT"/>
    <property type="match status" value="1"/>
</dbReference>
<dbReference type="SUPFAM" id="SSF53383">
    <property type="entry name" value="PLP-dependent transferases"/>
    <property type="match status" value="1"/>
</dbReference>
<name>PHNW_SALDC</name>
<feature type="chain" id="PRO_1000144855" description="2-aminoethylphosphonate--pyruvate transaminase">
    <location>
        <begin position="1"/>
        <end position="367"/>
    </location>
</feature>
<feature type="modified residue" description="N6-(pyridoxal phosphate)lysine" evidence="1">
    <location>
        <position position="194"/>
    </location>
</feature>
<comment type="function">
    <text evidence="1">Involved in phosphonate degradation.</text>
</comment>
<comment type="catalytic activity">
    <reaction evidence="1">
        <text>(2-aminoethyl)phosphonate + pyruvate = phosphonoacetaldehyde + L-alanine</text>
        <dbReference type="Rhea" id="RHEA:17021"/>
        <dbReference type="ChEBI" id="CHEBI:15361"/>
        <dbReference type="ChEBI" id="CHEBI:57418"/>
        <dbReference type="ChEBI" id="CHEBI:57972"/>
        <dbReference type="ChEBI" id="CHEBI:58383"/>
        <dbReference type="EC" id="2.6.1.37"/>
    </reaction>
</comment>
<comment type="cofactor">
    <cofactor evidence="1">
        <name>pyridoxal 5'-phosphate</name>
        <dbReference type="ChEBI" id="CHEBI:597326"/>
    </cofactor>
</comment>
<comment type="subunit">
    <text evidence="1">Homodimer.</text>
</comment>
<comment type="similarity">
    <text evidence="1">Belongs to the class-V pyridoxal-phosphate-dependent aminotransferase family. PhnW subfamily.</text>
</comment>